<name>RL10_VARPS</name>
<evidence type="ECO:0000255" key="1">
    <source>
        <dbReference type="HAMAP-Rule" id="MF_00362"/>
    </source>
</evidence>
<evidence type="ECO:0000305" key="2"/>
<feature type="chain" id="PRO_1000205455" description="Large ribosomal subunit protein uL10">
    <location>
        <begin position="1"/>
        <end position="177"/>
    </location>
</feature>
<sequence length="177" mass="18297">MSLNRSEKEAVISDVTSLAAKAQTLVMAEYRGITVADMTKLRSEARSKGVTLSVLKNTLARRAVAGSAFEIVGDQMTGPLIYGFSEDAVAAAKVVADFAKTNDKLVIRGGAFGGKALDVNGVKQLANIPSKEVLLAQLLGLMQSPISRTARVLAALAEKRGGGEAAPADAPAEAQAA</sequence>
<accession>C5CKF1</accession>
<reference key="1">
    <citation type="journal article" date="2011" name="J. Bacteriol.">
        <title>Complete genome sequence of the metabolically versatile plant growth-promoting endophyte, Variovorax paradoxus S110.</title>
        <authorList>
            <person name="Han J.I."/>
            <person name="Choi H.K."/>
            <person name="Lee S.W."/>
            <person name="Orwin P.M."/>
            <person name="Kim J."/>
            <person name="Laroe S.L."/>
            <person name="Kim T.G."/>
            <person name="O'Neil J."/>
            <person name="Leadbetter J.R."/>
            <person name="Lee S.Y."/>
            <person name="Hur C.G."/>
            <person name="Spain J.C."/>
            <person name="Ovchinnikova G."/>
            <person name="Goodwin L."/>
            <person name="Han C."/>
        </authorList>
    </citation>
    <scope>NUCLEOTIDE SEQUENCE [LARGE SCALE GENOMIC DNA]</scope>
    <source>
        <strain>S110</strain>
    </source>
</reference>
<gene>
    <name evidence="1" type="primary">rplJ</name>
    <name type="ordered locus">Vapar_0586</name>
</gene>
<dbReference type="EMBL" id="CP001635">
    <property type="protein sequence ID" value="ACS17249.1"/>
    <property type="molecule type" value="Genomic_DNA"/>
</dbReference>
<dbReference type="SMR" id="C5CKF1"/>
<dbReference type="STRING" id="543728.Vapar_0586"/>
<dbReference type="KEGG" id="vap:Vapar_0586"/>
<dbReference type="eggNOG" id="COG0244">
    <property type="taxonomic scope" value="Bacteria"/>
</dbReference>
<dbReference type="HOGENOM" id="CLU_092227_0_1_4"/>
<dbReference type="OrthoDB" id="9808307at2"/>
<dbReference type="GO" id="GO:0015934">
    <property type="term" value="C:large ribosomal subunit"/>
    <property type="evidence" value="ECO:0007669"/>
    <property type="project" value="InterPro"/>
</dbReference>
<dbReference type="GO" id="GO:0070180">
    <property type="term" value="F:large ribosomal subunit rRNA binding"/>
    <property type="evidence" value="ECO:0007669"/>
    <property type="project" value="UniProtKB-UniRule"/>
</dbReference>
<dbReference type="GO" id="GO:0003735">
    <property type="term" value="F:structural constituent of ribosome"/>
    <property type="evidence" value="ECO:0007669"/>
    <property type="project" value="InterPro"/>
</dbReference>
<dbReference type="GO" id="GO:0006412">
    <property type="term" value="P:translation"/>
    <property type="evidence" value="ECO:0007669"/>
    <property type="project" value="UniProtKB-UniRule"/>
</dbReference>
<dbReference type="CDD" id="cd05797">
    <property type="entry name" value="Ribosomal_L10"/>
    <property type="match status" value="1"/>
</dbReference>
<dbReference type="Gene3D" id="3.30.70.1730">
    <property type="match status" value="1"/>
</dbReference>
<dbReference type="Gene3D" id="6.10.250.290">
    <property type="match status" value="1"/>
</dbReference>
<dbReference type="HAMAP" id="MF_00362">
    <property type="entry name" value="Ribosomal_uL10"/>
    <property type="match status" value="1"/>
</dbReference>
<dbReference type="InterPro" id="IPR001790">
    <property type="entry name" value="Ribosomal_uL10"/>
</dbReference>
<dbReference type="InterPro" id="IPR043141">
    <property type="entry name" value="Ribosomal_uL10-like_sf"/>
</dbReference>
<dbReference type="InterPro" id="IPR022973">
    <property type="entry name" value="Ribosomal_uL10_bac"/>
</dbReference>
<dbReference type="InterPro" id="IPR047865">
    <property type="entry name" value="Ribosomal_uL10_bac_type"/>
</dbReference>
<dbReference type="InterPro" id="IPR002363">
    <property type="entry name" value="Ribosomal_uL10_CS_bac"/>
</dbReference>
<dbReference type="NCBIfam" id="NF000955">
    <property type="entry name" value="PRK00099.1-1"/>
    <property type="match status" value="1"/>
</dbReference>
<dbReference type="PANTHER" id="PTHR11560">
    <property type="entry name" value="39S RIBOSOMAL PROTEIN L10, MITOCHONDRIAL"/>
    <property type="match status" value="1"/>
</dbReference>
<dbReference type="Pfam" id="PF00466">
    <property type="entry name" value="Ribosomal_L10"/>
    <property type="match status" value="1"/>
</dbReference>
<dbReference type="SUPFAM" id="SSF160369">
    <property type="entry name" value="Ribosomal protein L10-like"/>
    <property type="match status" value="1"/>
</dbReference>
<dbReference type="PROSITE" id="PS01109">
    <property type="entry name" value="RIBOSOMAL_L10"/>
    <property type="match status" value="1"/>
</dbReference>
<proteinExistence type="inferred from homology"/>
<keyword id="KW-0687">Ribonucleoprotein</keyword>
<keyword id="KW-0689">Ribosomal protein</keyword>
<keyword id="KW-0694">RNA-binding</keyword>
<keyword id="KW-0699">rRNA-binding</keyword>
<comment type="function">
    <text evidence="1">Forms part of the ribosomal stalk, playing a central role in the interaction of the ribosome with GTP-bound translation factors.</text>
</comment>
<comment type="subunit">
    <text evidence="1">Part of the ribosomal stalk of the 50S ribosomal subunit. The N-terminus interacts with L11 and the large rRNA to form the base of the stalk. The C-terminus forms an elongated spine to which L12 dimers bind in a sequential fashion forming a multimeric L10(L12)X complex.</text>
</comment>
<comment type="similarity">
    <text evidence="1">Belongs to the universal ribosomal protein uL10 family.</text>
</comment>
<protein>
    <recommendedName>
        <fullName evidence="1">Large ribosomal subunit protein uL10</fullName>
    </recommendedName>
    <alternativeName>
        <fullName evidence="2">50S ribosomal protein L10</fullName>
    </alternativeName>
</protein>
<organism>
    <name type="scientific">Variovorax paradoxus (strain S110)</name>
    <dbReference type="NCBI Taxonomy" id="543728"/>
    <lineage>
        <taxon>Bacteria</taxon>
        <taxon>Pseudomonadati</taxon>
        <taxon>Pseudomonadota</taxon>
        <taxon>Betaproteobacteria</taxon>
        <taxon>Burkholderiales</taxon>
        <taxon>Comamonadaceae</taxon>
        <taxon>Variovorax</taxon>
    </lineage>
</organism>